<protein>
    <recommendedName>
        <fullName evidence="1">Teichoic acids export ATP-binding protein TagH</fullName>
        <ecNumber evidence="1">7.5.2.4</ecNumber>
    </recommendedName>
</protein>
<gene>
    <name evidence="1" type="primary">tagH</name>
    <name type="ordered locus">SAUSA300_0624</name>
</gene>
<organism>
    <name type="scientific">Staphylococcus aureus (strain USA300)</name>
    <dbReference type="NCBI Taxonomy" id="367830"/>
    <lineage>
        <taxon>Bacteria</taxon>
        <taxon>Bacillati</taxon>
        <taxon>Bacillota</taxon>
        <taxon>Bacilli</taxon>
        <taxon>Bacillales</taxon>
        <taxon>Staphylococcaceae</taxon>
        <taxon>Staphylococcus</taxon>
    </lineage>
</organism>
<keyword id="KW-0067">ATP-binding</keyword>
<keyword id="KW-1003">Cell membrane</keyword>
<keyword id="KW-0472">Membrane</keyword>
<keyword id="KW-0547">Nucleotide-binding</keyword>
<keyword id="KW-1278">Translocase</keyword>
<keyword id="KW-0813">Transport</keyword>
<reference key="1">
    <citation type="journal article" date="2006" name="Lancet">
        <title>Complete genome sequence of USA300, an epidemic clone of community-acquired meticillin-resistant Staphylococcus aureus.</title>
        <authorList>
            <person name="Diep B.A."/>
            <person name="Gill S.R."/>
            <person name="Chang R.F."/>
            <person name="Phan T.H."/>
            <person name="Chen J.H."/>
            <person name="Davidson M.G."/>
            <person name="Lin F."/>
            <person name="Lin J."/>
            <person name="Carleton H.A."/>
            <person name="Mongodin E.F."/>
            <person name="Sensabaugh G.F."/>
            <person name="Perdreau-Remington F."/>
        </authorList>
    </citation>
    <scope>NUCLEOTIDE SEQUENCE [LARGE SCALE GENOMIC DNA]</scope>
    <source>
        <strain>USA300</strain>
    </source>
</reference>
<name>TAGH_STAA3</name>
<comment type="function">
    <text evidence="1">Part of the ABC transporter complex TagGH involved in teichoic acids export. Responsible for energy coupling to the transport system.</text>
</comment>
<comment type="catalytic activity">
    <reaction evidence="1">
        <text>ATP + H2O + teichoic acidSide 1 = ADP + phosphate + teichoic acidSide 2.</text>
        <dbReference type="EC" id="7.5.2.4"/>
    </reaction>
</comment>
<comment type="subunit">
    <text evidence="1">The complex is composed of two ATP-binding proteins (TagH) and two transmembrane proteins (TagG).</text>
</comment>
<comment type="subcellular location">
    <subcellularLocation>
        <location evidence="1">Cell membrane</location>
        <topology evidence="1">Peripheral membrane protein</topology>
    </subcellularLocation>
</comment>
<comment type="similarity">
    <text evidence="1">Belongs to the ABC transporter superfamily. Teichoic acids exporter (TC 3.A.1.104.1) family.</text>
</comment>
<accession>Q2FJ01</accession>
<evidence type="ECO:0000255" key="1">
    <source>
        <dbReference type="HAMAP-Rule" id="MF_01715"/>
    </source>
</evidence>
<proteinExistence type="inferred from homology"/>
<feature type="chain" id="PRO_0000275852" description="Teichoic acids export ATP-binding protein TagH">
    <location>
        <begin position="1"/>
        <end position="264"/>
    </location>
</feature>
<feature type="domain" description="ABC transporter" evidence="1">
    <location>
        <begin position="5"/>
        <end position="243"/>
    </location>
</feature>
<feature type="binding site" evidence="1">
    <location>
        <begin position="57"/>
        <end position="64"/>
    </location>
    <ligand>
        <name>ATP</name>
        <dbReference type="ChEBI" id="CHEBI:30616"/>
    </ligand>
</feature>
<sequence>MNVSVNIKNVTKEYRIYRTNKERMKDALIPKHKNKTFFALDDISLKAYEGDVIGLVGINGSGKSTLSNIIGGSLSPTVGKVDRNGEVSVIAISAGLSGQLTGIENIEFKMLCMGFKRKEIKAMTPKIIEFSELGEFIYQPVKKYSSGMRAKLGFSINITVNPDILVIDEALSVGDQTFAQKCLDKIYEFKEQNKTIFFVSHNLGQVRQFCTKIAWIEGGKLKDYGELDDVLPKYEAFLNDFKKKSKAEQKEFRNKLDESRFVIK</sequence>
<dbReference type="EC" id="7.5.2.4" evidence="1"/>
<dbReference type="EMBL" id="CP000255">
    <property type="protein sequence ID" value="ABD22020.1"/>
    <property type="molecule type" value="Genomic_DNA"/>
</dbReference>
<dbReference type="RefSeq" id="WP_001103232.1">
    <property type="nucleotide sequence ID" value="NZ_CP027476.1"/>
</dbReference>
<dbReference type="SMR" id="Q2FJ01"/>
<dbReference type="GeneID" id="98344978"/>
<dbReference type="KEGG" id="saa:SAUSA300_0624"/>
<dbReference type="HOGENOM" id="CLU_000604_1_2_9"/>
<dbReference type="OMA" id="GDEPFQK"/>
<dbReference type="Proteomes" id="UP000001939">
    <property type="component" value="Chromosome"/>
</dbReference>
<dbReference type="GO" id="GO:0005886">
    <property type="term" value="C:plasma membrane"/>
    <property type="evidence" value="ECO:0007669"/>
    <property type="project" value="UniProtKB-SubCell"/>
</dbReference>
<dbReference type="GO" id="GO:0015438">
    <property type="term" value="F:ABC-type teichoic acid transporter activity"/>
    <property type="evidence" value="ECO:0007669"/>
    <property type="project" value="UniProtKB-EC"/>
</dbReference>
<dbReference type="GO" id="GO:0005524">
    <property type="term" value="F:ATP binding"/>
    <property type="evidence" value="ECO:0007669"/>
    <property type="project" value="UniProtKB-KW"/>
</dbReference>
<dbReference type="GO" id="GO:0016887">
    <property type="term" value="F:ATP hydrolysis activity"/>
    <property type="evidence" value="ECO:0007669"/>
    <property type="project" value="InterPro"/>
</dbReference>
<dbReference type="CDD" id="cd03220">
    <property type="entry name" value="ABC_KpsT_Wzt"/>
    <property type="match status" value="1"/>
</dbReference>
<dbReference type="FunFam" id="3.40.50.300:FF:003010">
    <property type="entry name" value="Teichoic acids export ATP-binding protein TagH"/>
    <property type="match status" value="1"/>
</dbReference>
<dbReference type="Gene3D" id="3.40.50.300">
    <property type="entry name" value="P-loop containing nucleotide triphosphate hydrolases"/>
    <property type="match status" value="1"/>
</dbReference>
<dbReference type="InterPro" id="IPR003593">
    <property type="entry name" value="AAA+_ATPase"/>
</dbReference>
<dbReference type="InterPro" id="IPR003439">
    <property type="entry name" value="ABC_transporter-like_ATP-bd"/>
</dbReference>
<dbReference type="InterPro" id="IPR017871">
    <property type="entry name" value="ABC_transporter-like_CS"/>
</dbReference>
<dbReference type="InterPro" id="IPR015860">
    <property type="entry name" value="ABC_transpr_TagH-like"/>
</dbReference>
<dbReference type="InterPro" id="IPR050683">
    <property type="entry name" value="Bact_Polysacc_Export_ATP-bd"/>
</dbReference>
<dbReference type="InterPro" id="IPR027417">
    <property type="entry name" value="P-loop_NTPase"/>
</dbReference>
<dbReference type="NCBIfam" id="NF010066">
    <property type="entry name" value="PRK13546.1"/>
    <property type="match status" value="1"/>
</dbReference>
<dbReference type="PANTHER" id="PTHR46743">
    <property type="entry name" value="TEICHOIC ACIDS EXPORT ATP-BINDING PROTEIN TAGH"/>
    <property type="match status" value="1"/>
</dbReference>
<dbReference type="PANTHER" id="PTHR46743:SF2">
    <property type="entry name" value="TEICHOIC ACIDS EXPORT ATP-BINDING PROTEIN TAGH"/>
    <property type="match status" value="1"/>
</dbReference>
<dbReference type="Pfam" id="PF00005">
    <property type="entry name" value="ABC_tran"/>
    <property type="match status" value="1"/>
</dbReference>
<dbReference type="SMART" id="SM00382">
    <property type="entry name" value="AAA"/>
    <property type="match status" value="1"/>
</dbReference>
<dbReference type="SUPFAM" id="SSF52540">
    <property type="entry name" value="P-loop containing nucleoside triphosphate hydrolases"/>
    <property type="match status" value="1"/>
</dbReference>
<dbReference type="PROSITE" id="PS00211">
    <property type="entry name" value="ABC_TRANSPORTER_1"/>
    <property type="match status" value="1"/>
</dbReference>
<dbReference type="PROSITE" id="PS50893">
    <property type="entry name" value="ABC_TRANSPORTER_2"/>
    <property type="match status" value="1"/>
</dbReference>
<dbReference type="PROSITE" id="PS51251">
    <property type="entry name" value="TAGH"/>
    <property type="match status" value="1"/>
</dbReference>